<keyword id="KW-0929">Antimicrobial</keyword>
<keyword id="KW-1015">Disulfide bond</keyword>
<keyword id="KW-0295">Fungicide</keyword>
<keyword id="KW-0611">Plant defense</keyword>
<keyword id="KW-1185">Reference proteome</keyword>
<keyword id="KW-0964">Secreted</keyword>
<keyword id="KW-0732">Signal</keyword>
<evidence type="ECO:0000250" key="1"/>
<evidence type="ECO:0000255" key="2"/>
<evidence type="ECO:0000305" key="3"/>
<accession>P82633</accession>
<gene>
    <name type="primary">SCRL14</name>
    <name type="ordered locus">At4g22115</name>
    <name type="ORF">F1N20</name>
</gene>
<protein>
    <recommendedName>
        <fullName>Putative defensin-like protein 234</fullName>
    </recommendedName>
    <alternativeName>
        <fullName>Putative S locus cysteine-rich-like protein 14</fullName>
        <shortName>Protein SCRL14</shortName>
        <shortName>SCR-like protein 14</shortName>
    </alternativeName>
</protein>
<proteinExistence type="inferred from homology"/>
<feature type="signal peptide" evidence="2">
    <location>
        <begin position="1"/>
        <end position="26"/>
    </location>
</feature>
<feature type="chain" id="PRO_0000031940" description="Putative defensin-like protein 234">
    <location>
        <begin position="27"/>
        <end position="86"/>
    </location>
</feature>
<feature type="disulfide bond" evidence="1">
    <location>
        <begin position="34"/>
        <end position="86"/>
    </location>
</feature>
<feature type="disulfide bond" evidence="1">
    <location>
        <begin position="44"/>
        <end position="71"/>
    </location>
</feature>
<feature type="disulfide bond" evidence="1">
    <location>
        <begin position="52"/>
        <end position="80"/>
    </location>
</feature>
<feature type="disulfide bond" evidence="1">
    <location>
        <begin position="69"/>
        <end position="82"/>
    </location>
</feature>
<reference evidence="3" key="1">
    <citation type="journal article" date="1999" name="Nature">
        <title>Sequence and analysis of chromosome 4 of the plant Arabidopsis thaliana.</title>
        <authorList>
            <person name="Mayer K.F.X."/>
            <person name="Schueller C."/>
            <person name="Wambutt R."/>
            <person name="Murphy G."/>
            <person name="Volckaert G."/>
            <person name="Pohl T."/>
            <person name="Duesterhoeft A."/>
            <person name="Stiekema W."/>
            <person name="Entian K.-D."/>
            <person name="Terryn N."/>
            <person name="Harris B."/>
            <person name="Ansorge W."/>
            <person name="Brandt P."/>
            <person name="Grivell L.A."/>
            <person name="Rieger M."/>
            <person name="Weichselgartner M."/>
            <person name="de Simone V."/>
            <person name="Obermaier B."/>
            <person name="Mache R."/>
            <person name="Mueller M."/>
            <person name="Kreis M."/>
            <person name="Delseny M."/>
            <person name="Puigdomenech P."/>
            <person name="Watson M."/>
            <person name="Schmidtheini T."/>
            <person name="Reichert B."/>
            <person name="Portetelle D."/>
            <person name="Perez-Alonso M."/>
            <person name="Boutry M."/>
            <person name="Bancroft I."/>
            <person name="Vos P."/>
            <person name="Hoheisel J."/>
            <person name="Zimmermann W."/>
            <person name="Wedler H."/>
            <person name="Ridley P."/>
            <person name="Langham S.-A."/>
            <person name="McCullagh B."/>
            <person name="Bilham L."/>
            <person name="Robben J."/>
            <person name="van der Schueren J."/>
            <person name="Grymonprez B."/>
            <person name="Chuang Y.-J."/>
            <person name="Vandenbussche F."/>
            <person name="Braeken M."/>
            <person name="Weltjens I."/>
            <person name="Voet M."/>
            <person name="Bastiaens I."/>
            <person name="Aert R."/>
            <person name="Defoor E."/>
            <person name="Weitzenegger T."/>
            <person name="Bothe G."/>
            <person name="Ramsperger U."/>
            <person name="Hilbert H."/>
            <person name="Braun M."/>
            <person name="Holzer E."/>
            <person name="Brandt A."/>
            <person name="Peters S."/>
            <person name="van Staveren M."/>
            <person name="Dirkse W."/>
            <person name="Mooijman P."/>
            <person name="Klein Lankhorst R."/>
            <person name="Rose M."/>
            <person name="Hauf J."/>
            <person name="Koetter P."/>
            <person name="Berneiser S."/>
            <person name="Hempel S."/>
            <person name="Feldpausch M."/>
            <person name="Lamberth S."/>
            <person name="Van den Daele H."/>
            <person name="De Keyser A."/>
            <person name="Buysshaert C."/>
            <person name="Gielen J."/>
            <person name="Villarroel R."/>
            <person name="De Clercq R."/>
            <person name="van Montagu M."/>
            <person name="Rogers J."/>
            <person name="Cronin A."/>
            <person name="Quail M.A."/>
            <person name="Bray-Allen S."/>
            <person name="Clark L."/>
            <person name="Doggett J."/>
            <person name="Hall S."/>
            <person name="Kay M."/>
            <person name="Lennard N."/>
            <person name="McLay K."/>
            <person name="Mayes R."/>
            <person name="Pettett A."/>
            <person name="Rajandream M.A."/>
            <person name="Lyne M."/>
            <person name="Benes V."/>
            <person name="Rechmann S."/>
            <person name="Borkova D."/>
            <person name="Bloecker H."/>
            <person name="Scharfe M."/>
            <person name="Grimm M."/>
            <person name="Loehnert T.-H."/>
            <person name="Dose S."/>
            <person name="de Haan M."/>
            <person name="Maarse A.C."/>
            <person name="Schaefer M."/>
            <person name="Mueller-Auer S."/>
            <person name="Gabel C."/>
            <person name="Fuchs M."/>
            <person name="Fartmann B."/>
            <person name="Granderath K."/>
            <person name="Dauner D."/>
            <person name="Herzl A."/>
            <person name="Neumann S."/>
            <person name="Argiriou A."/>
            <person name="Vitale D."/>
            <person name="Liguori R."/>
            <person name="Piravandi E."/>
            <person name="Massenet O."/>
            <person name="Quigley F."/>
            <person name="Clabauld G."/>
            <person name="Muendlein A."/>
            <person name="Felber R."/>
            <person name="Schnabl S."/>
            <person name="Hiller R."/>
            <person name="Schmidt W."/>
            <person name="Lecharny A."/>
            <person name="Aubourg S."/>
            <person name="Chefdor F."/>
            <person name="Cooke R."/>
            <person name="Berger C."/>
            <person name="Monfort A."/>
            <person name="Casacuberta E."/>
            <person name="Gibbons T."/>
            <person name="Weber N."/>
            <person name="Vandenbol M."/>
            <person name="Bargues M."/>
            <person name="Terol J."/>
            <person name="Torres A."/>
            <person name="Perez-Perez A."/>
            <person name="Purnelle B."/>
            <person name="Bent E."/>
            <person name="Johnson S."/>
            <person name="Tacon D."/>
            <person name="Jesse T."/>
            <person name="Heijnen L."/>
            <person name="Schwarz S."/>
            <person name="Scholler P."/>
            <person name="Heber S."/>
            <person name="Francs P."/>
            <person name="Bielke C."/>
            <person name="Frishman D."/>
            <person name="Haase D."/>
            <person name="Lemcke K."/>
            <person name="Mewes H.-W."/>
            <person name="Stocker S."/>
            <person name="Zaccaria P."/>
            <person name="Bevan M."/>
            <person name="Wilson R.K."/>
            <person name="de la Bastide M."/>
            <person name="Habermann K."/>
            <person name="Parnell L."/>
            <person name="Dedhia N."/>
            <person name="Gnoj L."/>
            <person name="Schutz K."/>
            <person name="Huang E."/>
            <person name="Spiegel L."/>
            <person name="Sekhon M."/>
            <person name="Murray J."/>
            <person name="Sheet P."/>
            <person name="Cordes M."/>
            <person name="Abu-Threideh J."/>
            <person name="Stoneking T."/>
            <person name="Kalicki J."/>
            <person name="Graves T."/>
            <person name="Harmon G."/>
            <person name="Edwards J."/>
            <person name="Latreille P."/>
            <person name="Courtney L."/>
            <person name="Cloud J."/>
            <person name="Abbott A."/>
            <person name="Scott K."/>
            <person name="Johnson D."/>
            <person name="Minx P."/>
            <person name="Bentley D."/>
            <person name="Fulton B."/>
            <person name="Miller N."/>
            <person name="Greco T."/>
            <person name="Kemp K."/>
            <person name="Kramer J."/>
            <person name="Fulton L."/>
            <person name="Mardis E."/>
            <person name="Dante M."/>
            <person name="Pepin K."/>
            <person name="Hillier L.W."/>
            <person name="Nelson J."/>
            <person name="Spieth J."/>
            <person name="Ryan E."/>
            <person name="Andrews S."/>
            <person name="Geisel C."/>
            <person name="Layman D."/>
            <person name="Du H."/>
            <person name="Ali J."/>
            <person name="Berghoff A."/>
            <person name="Jones K."/>
            <person name="Drone K."/>
            <person name="Cotton M."/>
            <person name="Joshu C."/>
            <person name="Antonoiu B."/>
            <person name="Zidanic M."/>
            <person name="Strong C."/>
            <person name="Sun H."/>
            <person name="Lamar B."/>
            <person name="Yordan C."/>
            <person name="Ma P."/>
            <person name="Zhong J."/>
            <person name="Preston R."/>
            <person name="Vil D."/>
            <person name="Shekher M."/>
            <person name="Matero A."/>
            <person name="Shah R."/>
            <person name="Swaby I.K."/>
            <person name="O'Shaughnessy A."/>
            <person name="Rodriguez M."/>
            <person name="Hoffman J."/>
            <person name="Till S."/>
            <person name="Granat S."/>
            <person name="Shohdy N."/>
            <person name="Hasegawa A."/>
            <person name="Hameed A."/>
            <person name="Lodhi M."/>
            <person name="Johnson A."/>
            <person name="Chen E."/>
            <person name="Marra M.A."/>
            <person name="Martienssen R."/>
            <person name="McCombie W.R."/>
        </authorList>
    </citation>
    <scope>NUCLEOTIDE SEQUENCE [LARGE SCALE GENOMIC DNA]</scope>
    <source>
        <strain>cv. Columbia</strain>
    </source>
</reference>
<reference key="2">
    <citation type="journal article" date="2017" name="Plant J.">
        <title>Araport11: a complete reannotation of the Arabidopsis thaliana reference genome.</title>
        <authorList>
            <person name="Cheng C.Y."/>
            <person name="Krishnakumar V."/>
            <person name="Chan A.P."/>
            <person name="Thibaud-Nissen F."/>
            <person name="Schobel S."/>
            <person name="Town C.D."/>
        </authorList>
    </citation>
    <scope>GENOME REANNOTATION</scope>
    <source>
        <strain>cv. Columbia</strain>
    </source>
</reference>
<reference evidence="3" key="3">
    <citation type="journal article" date="2001" name="Plant Mol. Biol.">
        <title>Two large Arabidopsis thaliana gene families are homologous to the Brassica gene superfamily that encodes pollen coat proteins and the male component of the self-incompatibility response.</title>
        <authorList>
            <person name="Vanoosthuyse V."/>
            <person name="Miege C."/>
            <person name="Dumas C."/>
            <person name="Cock J.M."/>
        </authorList>
    </citation>
    <scope>IDENTIFICATION</scope>
</reference>
<reference key="4">
    <citation type="journal article" date="2005" name="Plant Physiol.">
        <title>Genome organization of more than 300 defensin-like genes in Arabidopsis.</title>
        <authorList>
            <person name="Silverstein K.A.T."/>
            <person name="Graham M.A."/>
            <person name="Paape T.D."/>
            <person name="VandenBosch K.A."/>
        </authorList>
    </citation>
    <scope>GENE FAMILY</scope>
</reference>
<dbReference type="EMBL" id="AL022140">
    <property type="status" value="NOT_ANNOTATED_CDS"/>
    <property type="molecule type" value="Genomic_DNA"/>
</dbReference>
<dbReference type="EMBL" id="AL161556">
    <property type="status" value="NOT_ANNOTATED_CDS"/>
    <property type="molecule type" value="Genomic_DNA"/>
</dbReference>
<dbReference type="EMBL" id="CP002687">
    <property type="protein sequence ID" value="AEE84553.1"/>
    <property type="molecule type" value="Genomic_DNA"/>
</dbReference>
<dbReference type="RefSeq" id="NP_001031694.1">
    <property type="nucleotide sequence ID" value="NM_001036617.2"/>
</dbReference>
<dbReference type="SMR" id="P82633"/>
<dbReference type="STRING" id="3702.P82633"/>
<dbReference type="PaxDb" id="3702-AT4G22115.1"/>
<dbReference type="ProteomicsDB" id="224024"/>
<dbReference type="EnsemblPlants" id="AT4G22115.1">
    <property type="protein sequence ID" value="AT4G22115.1"/>
    <property type="gene ID" value="AT4G22115"/>
</dbReference>
<dbReference type="GeneID" id="3770429"/>
<dbReference type="Gramene" id="AT4G22115.1">
    <property type="protein sequence ID" value="AT4G22115.1"/>
    <property type="gene ID" value="AT4G22115"/>
</dbReference>
<dbReference type="KEGG" id="ath:AT4G22115"/>
<dbReference type="Araport" id="AT4G22115"/>
<dbReference type="TAIR" id="AT4G22115">
    <property type="gene designation" value="SCRL14"/>
</dbReference>
<dbReference type="HOGENOM" id="CLU_174283_0_0_1"/>
<dbReference type="InParanoid" id="P82633"/>
<dbReference type="OMA" id="EHLCRCY"/>
<dbReference type="OrthoDB" id="1020824at2759"/>
<dbReference type="PhylomeDB" id="P82633"/>
<dbReference type="PRO" id="PR:P82633"/>
<dbReference type="Proteomes" id="UP000006548">
    <property type="component" value="Chromosome 4"/>
</dbReference>
<dbReference type="ExpressionAtlas" id="P82633">
    <property type="expression patterns" value="baseline and differential"/>
</dbReference>
<dbReference type="GO" id="GO:0005576">
    <property type="term" value="C:extracellular region"/>
    <property type="evidence" value="ECO:0007669"/>
    <property type="project" value="UniProtKB-SubCell"/>
</dbReference>
<dbReference type="GO" id="GO:0050832">
    <property type="term" value="P:defense response to fungus"/>
    <property type="evidence" value="ECO:0007669"/>
    <property type="project" value="UniProtKB-KW"/>
</dbReference>
<dbReference type="GO" id="GO:0031640">
    <property type="term" value="P:killing of cells of another organism"/>
    <property type="evidence" value="ECO:0007669"/>
    <property type="project" value="UniProtKB-KW"/>
</dbReference>
<dbReference type="GO" id="GO:0007165">
    <property type="term" value="P:signal transduction"/>
    <property type="evidence" value="ECO:0007669"/>
    <property type="project" value="InterPro"/>
</dbReference>
<dbReference type="InterPro" id="IPR010682">
    <property type="entry name" value="SCRL"/>
</dbReference>
<dbReference type="PANTHER" id="PTHR34450:SF5">
    <property type="entry name" value="DEFENSIN-LIKE PROTEIN 229-RELATED"/>
    <property type="match status" value="1"/>
</dbReference>
<dbReference type="PANTHER" id="PTHR34450">
    <property type="entry name" value="DEFENSIN-LIKE PROTEIN 245-RELATED"/>
    <property type="match status" value="1"/>
</dbReference>
<dbReference type="Pfam" id="PF06876">
    <property type="entry name" value="SCRL"/>
    <property type="match status" value="1"/>
</dbReference>
<organism evidence="3">
    <name type="scientific">Arabidopsis thaliana</name>
    <name type="common">Mouse-ear cress</name>
    <dbReference type="NCBI Taxonomy" id="3702"/>
    <lineage>
        <taxon>Eukaryota</taxon>
        <taxon>Viridiplantae</taxon>
        <taxon>Streptophyta</taxon>
        <taxon>Embryophyta</taxon>
        <taxon>Tracheophyta</taxon>
        <taxon>Spermatophyta</taxon>
        <taxon>Magnoliopsida</taxon>
        <taxon>eudicotyledons</taxon>
        <taxon>Gunneridae</taxon>
        <taxon>Pentapetalae</taxon>
        <taxon>rosids</taxon>
        <taxon>malvids</taxon>
        <taxon>Brassicales</taxon>
        <taxon>Brassicaceae</taxon>
        <taxon>Camelineae</taxon>
        <taxon>Arabidopsis</taxon>
    </lineage>
</organism>
<comment type="subcellular location">
    <subcellularLocation>
        <location evidence="1">Secreted</location>
    </subcellularLocation>
</comment>
<comment type="similarity">
    <text evidence="3">Belongs to the DEFL family.</text>
</comment>
<name>DF234_ARATH</name>
<sequence>MRSATLLLVSCVLLSFILGNVKEVEAVLKPMDQCGRKDIFLGGCGSNGSKTCINDFVKKGGVAAKPSSCECDDFGEEHLCRCYVPC</sequence>